<name>NAGB_ECOL6</name>
<dbReference type="EC" id="3.5.99.6" evidence="1"/>
<dbReference type="EMBL" id="AE014075">
    <property type="protein sequence ID" value="AAN79226.1"/>
    <property type="molecule type" value="Genomic_DNA"/>
</dbReference>
<dbReference type="RefSeq" id="WP_001237080.1">
    <property type="nucleotide sequence ID" value="NZ_CP051263.1"/>
</dbReference>
<dbReference type="SMR" id="Q8FJX7"/>
<dbReference type="STRING" id="199310.c0753"/>
<dbReference type="KEGG" id="ecc:c0753"/>
<dbReference type="eggNOG" id="COG0363">
    <property type="taxonomic scope" value="Bacteria"/>
</dbReference>
<dbReference type="HOGENOM" id="CLU_049611_0_1_6"/>
<dbReference type="BioCyc" id="ECOL199310:C0753-MONOMER"/>
<dbReference type="UniPathway" id="UPA00629">
    <property type="reaction ID" value="UER00684"/>
</dbReference>
<dbReference type="Proteomes" id="UP000001410">
    <property type="component" value="Chromosome"/>
</dbReference>
<dbReference type="GO" id="GO:0005829">
    <property type="term" value="C:cytosol"/>
    <property type="evidence" value="ECO:0007669"/>
    <property type="project" value="TreeGrafter"/>
</dbReference>
<dbReference type="GO" id="GO:0004342">
    <property type="term" value="F:glucosamine-6-phosphate deaminase activity"/>
    <property type="evidence" value="ECO:0007669"/>
    <property type="project" value="UniProtKB-UniRule"/>
</dbReference>
<dbReference type="GO" id="GO:0042802">
    <property type="term" value="F:identical protein binding"/>
    <property type="evidence" value="ECO:0007669"/>
    <property type="project" value="TreeGrafter"/>
</dbReference>
<dbReference type="GO" id="GO:0005975">
    <property type="term" value="P:carbohydrate metabolic process"/>
    <property type="evidence" value="ECO:0007669"/>
    <property type="project" value="InterPro"/>
</dbReference>
<dbReference type="GO" id="GO:0006043">
    <property type="term" value="P:glucosamine catabolic process"/>
    <property type="evidence" value="ECO:0007669"/>
    <property type="project" value="TreeGrafter"/>
</dbReference>
<dbReference type="GO" id="GO:0006046">
    <property type="term" value="P:N-acetylglucosamine catabolic process"/>
    <property type="evidence" value="ECO:0007669"/>
    <property type="project" value="TreeGrafter"/>
</dbReference>
<dbReference type="GO" id="GO:0019262">
    <property type="term" value="P:N-acetylneuraminate catabolic process"/>
    <property type="evidence" value="ECO:0007669"/>
    <property type="project" value="UniProtKB-UniRule"/>
</dbReference>
<dbReference type="CDD" id="cd01399">
    <property type="entry name" value="GlcN6P_deaminase"/>
    <property type="match status" value="1"/>
</dbReference>
<dbReference type="FunFam" id="3.40.50.1360:FF:000002">
    <property type="entry name" value="Glucosamine-6-phosphate deaminase"/>
    <property type="match status" value="1"/>
</dbReference>
<dbReference type="Gene3D" id="3.40.50.1360">
    <property type="match status" value="1"/>
</dbReference>
<dbReference type="HAMAP" id="MF_01241">
    <property type="entry name" value="GlcN6P_deamin"/>
    <property type="match status" value="1"/>
</dbReference>
<dbReference type="InterPro" id="IPR006148">
    <property type="entry name" value="Glc/Gal-6P_isomerase"/>
</dbReference>
<dbReference type="InterPro" id="IPR004547">
    <property type="entry name" value="Glucosamine6P_isomerase"/>
</dbReference>
<dbReference type="InterPro" id="IPR018321">
    <property type="entry name" value="Glucosamine6P_isomerase_CS"/>
</dbReference>
<dbReference type="InterPro" id="IPR037171">
    <property type="entry name" value="NagB/RpiA_transferase-like"/>
</dbReference>
<dbReference type="NCBIfam" id="TIGR00502">
    <property type="entry name" value="nagB"/>
    <property type="match status" value="1"/>
</dbReference>
<dbReference type="NCBIfam" id="NF001685">
    <property type="entry name" value="PRK00443.1-5"/>
    <property type="match status" value="1"/>
</dbReference>
<dbReference type="PANTHER" id="PTHR11280">
    <property type="entry name" value="GLUCOSAMINE-6-PHOSPHATE ISOMERASE"/>
    <property type="match status" value="1"/>
</dbReference>
<dbReference type="PANTHER" id="PTHR11280:SF5">
    <property type="entry name" value="GLUCOSAMINE-6-PHOSPHATE ISOMERASE"/>
    <property type="match status" value="1"/>
</dbReference>
<dbReference type="Pfam" id="PF01182">
    <property type="entry name" value="Glucosamine_iso"/>
    <property type="match status" value="1"/>
</dbReference>
<dbReference type="SUPFAM" id="SSF100950">
    <property type="entry name" value="NagB/RpiA/CoA transferase-like"/>
    <property type="match status" value="1"/>
</dbReference>
<dbReference type="PROSITE" id="PS01161">
    <property type="entry name" value="GLC_GALNAC_ISOMERASE"/>
    <property type="match status" value="1"/>
</dbReference>
<protein>
    <recommendedName>
        <fullName evidence="1">Glucosamine-6-phosphate deaminase</fullName>
        <ecNumber evidence="1">3.5.99.6</ecNumber>
    </recommendedName>
    <alternativeName>
        <fullName evidence="1">GlcN6P deaminase</fullName>
        <shortName evidence="1">GNPDA</shortName>
    </alternativeName>
    <alternativeName>
        <fullName evidence="1">Glucosamine-6-phosphate isomerase</fullName>
    </alternativeName>
</protein>
<gene>
    <name evidence="1" type="primary">nagB</name>
    <name type="ordered locus">c0753</name>
</gene>
<proteinExistence type="inferred from homology"/>
<feature type="chain" id="PRO_0000160144" description="Glucosamine-6-phosphate deaminase">
    <location>
        <begin position="1"/>
        <end position="266"/>
    </location>
</feature>
<feature type="active site" description="Proton acceptor; for enolization step" evidence="1">
    <location>
        <position position="72"/>
    </location>
</feature>
<feature type="active site" description="For ring-opening step" evidence="1">
    <location>
        <position position="141"/>
    </location>
</feature>
<feature type="active site" description="Proton acceptor; for ring-opening step" evidence="1">
    <location>
        <position position="143"/>
    </location>
</feature>
<feature type="active site" description="For ring-opening step" evidence="1">
    <location>
        <position position="148"/>
    </location>
</feature>
<feature type="site" description="Part of the allosteric site" evidence="1">
    <location>
        <position position="151"/>
    </location>
</feature>
<feature type="site" description="Part of the allosteric site" evidence="1">
    <location>
        <position position="158"/>
    </location>
</feature>
<feature type="site" description="Part of the allosteric site" evidence="1">
    <location>
        <position position="160"/>
    </location>
</feature>
<feature type="site" description="Part of the allosteric site" evidence="1">
    <location>
        <position position="161"/>
    </location>
</feature>
<feature type="site" description="Part of the allosteric site" evidence="1">
    <location>
        <position position="254"/>
    </location>
</feature>
<feature type="disulfide bond" description="Interchain" evidence="1">
    <location>
        <position position="219"/>
    </location>
</feature>
<keyword id="KW-0021">Allosteric enzyme</keyword>
<keyword id="KW-0119">Carbohydrate metabolism</keyword>
<keyword id="KW-1015">Disulfide bond</keyword>
<keyword id="KW-0378">Hydrolase</keyword>
<keyword id="KW-1185">Reference proteome</keyword>
<evidence type="ECO:0000255" key="1">
    <source>
        <dbReference type="HAMAP-Rule" id="MF_01241"/>
    </source>
</evidence>
<accession>Q8FJX7</accession>
<comment type="function">
    <text evidence="1">Catalyzes the reversible isomerization-deamination of glucosamine 6-phosphate (GlcN6P) to form fructose 6-phosphate (Fru6P) and ammonium ion.</text>
</comment>
<comment type="catalytic activity">
    <reaction evidence="1">
        <text>alpha-D-glucosamine 6-phosphate + H2O = beta-D-fructose 6-phosphate + NH4(+)</text>
        <dbReference type="Rhea" id="RHEA:12172"/>
        <dbReference type="ChEBI" id="CHEBI:15377"/>
        <dbReference type="ChEBI" id="CHEBI:28938"/>
        <dbReference type="ChEBI" id="CHEBI:57634"/>
        <dbReference type="ChEBI" id="CHEBI:75989"/>
        <dbReference type="EC" id="3.5.99.6"/>
    </reaction>
</comment>
<comment type="activity regulation">
    <text evidence="1">Allosterically activated by N-acetylglucosamine 6-phosphate (GlcNAc6P).</text>
</comment>
<comment type="pathway">
    <text evidence="1">Amino-sugar metabolism; N-acetylneuraminate degradation; D-fructose 6-phosphate from N-acetylneuraminate: step 5/5.</text>
</comment>
<comment type="subunit">
    <text evidence="1">Homohexamer; trimer of disulfide-linked dimers.</text>
</comment>
<comment type="similarity">
    <text evidence="1">Belongs to the glucosamine/galactosamine-6-phosphate isomerase family. NagB subfamily.</text>
</comment>
<sequence>MRLIPLTTAEQVGKWAARHIVNRINAFKPTADRPFVLGLPTGGTPMTTYKALVEMHKAGQVSFKHVVTFNMDEYVGLPKEHPESYYSFMHRNFFDHVDIPAENINLLNGNAPDIEAECRQYEEKIRSYGKIHLFMGGVGNDGHIAFNEPASSLASRTRIKTLTHDTRVANSRFFDNDVNQVPKYALTVGVGTLLDAEEVMILVLGSQKALALQAAVEGCVNHMWTISCLQLHPKAIMVCDEPSTMELKVKTLRYFNELEAENIKGL</sequence>
<reference key="1">
    <citation type="journal article" date="2002" name="Proc. Natl. Acad. Sci. U.S.A.">
        <title>Extensive mosaic structure revealed by the complete genome sequence of uropathogenic Escherichia coli.</title>
        <authorList>
            <person name="Welch R.A."/>
            <person name="Burland V."/>
            <person name="Plunkett G. III"/>
            <person name="Redford P."/>
            <person name="Roesch P."/>
            <person name="Rasko D."/>
            <person name="Buckles E.L."/>
            <person name="Liou S.-R."/>
            <person name="Boutin A."/>
            <person name="Hackett J."/>
            <person name="Stroud D."/>
            <person name="Mayhew G.F."/>
            <person name="Rose D.J."/>
            <person name="Zhou S."/>
            <person name="Schwartz D.C."/>
            <person name="Perna N.T."/>
            <person name="Mobley H.L.T."/>
            <person name="Donnenberg M.S."/>
            <person name="Blattner F.R."/>
        </authorList>
    </citation>
    <scope>NUCLEOTIDE SEQUENCE [LARGE SCALE GENOMIC DNA]</scope>
    <source>
        <strain>CFT073 / ATCC 700928 / UPEC</strain>
    </source>
</reference>
<organism>
    <name type="scientific">Escherichia coli O6:H1 (strain CFT073 / ATCC 700928 / UPEC)</name>
    <dbReference type="NCBI Taxonomy" id="199310"/>
    <lineage>
        <taxon>Bacteria</taxon>
        <taxon>Pseudomonadati</taxon>
        <taxon>Pseudomonadota</taxon>
        <taxon>Gammaproteobacteria</taxon>
        <taxon>Enterobacterales</taxon>
        <taxon>Enterobacteriaceae</taxon>
        <taxon>Escherichia</taxon>
    </lineage>
</organism>